<gene>
    <name type="primary">VRG4</name>
    <name type="ORF">PGUG_03139</name>
</gene>
<accession>A5DIN8</accession>
<reference key="1">
    <citation type="journal article" date="2009" name="Nature">
        <title>Evolution of pathogenicity and sexual reproduction in eight Candida genomes.</title>
        <authorList>
            <person name="Butler G."/>
            <person name="Rasmussen M.D."/>
            <person name="Lin M.F."/>
            <person name="Santos M.A.S."/>
            <person name="Sakthikumar S."/>
            <person name="Munro C.A."/>
            <person name="Rheinbay E."/>
            <person name="Grabherr M."/>
            <person name="Forche A."/>
            <person name="Reedy J.L."/>
            <person name="Agrafioti I."/>
            <person name="Arnaud M.B."/>
            <person name="Bates S."/>
            <person name="Brown A.J.P."/>
            <person name="Brunke S."/>
            <person name="Costanzo M.C."/>
            <person name="Fitzpatrick D.A."/>
            <person name="de Groot P.W.J."/>
            <person name="Harris D."/>
            <person name="Hoyer L.L."/>
            <person name="Hube B."/>
            <person name="Klis F.M."/>
            <person name="Kodira C."/>
            <person name="Lennard N."/>
            <person name="Logue M.E."/>
            <person name="Martin R."/>
            <person name="Neiman A.M."/>
            <person name="Nikolaou E."/>
            <person name="Quail M.A."/>
            <person name="Quinn J."/>
            <person name="Santos M.C."/>
            <person name="Schmitzberger F.F."/>
            <person name="Sherlock G."/>
            <person name="Shah P."/>
            <person name="Silverstein K.A.T."/>
            <person name="Skrzypek M.S."/>
            <person name="Soll D."/>
            <person name="Staggs R."/>
            <person name="Stansfield I."/>
            <person name="Stumpf M.P.H."/>
            <person name="Sudbery P.E."/>
            <person name="Srikantha T."/>
            <person name="Zeng Q."/>
            <person name="Berman J."/>
            <person name="Berriman M."/>
            <person name="Heitman J."/>
            <person name="Gow N.A.R."/>
            <person name="Lorenz M.C."/>
            <person name="Birren B.W."/>
            <person name="Kellis M."/>
            <person name="Cuomo C.A."/>
        </authorList>
    </citation>
    <scope>NUCLEOTIDE SEQUENCE [LARGE SCALE GENOMIC DNA]</scope>
    <source>
        <strain>ATCC 6260 / CBS 566 / DSM 6381 / JCM 1539 / NBRC 10279 / NRRL Y-324</strain>
    </source>
</reference>
<feature type="chain" id="PRO_0000333533" description="GDP-mannose transporter">
    <location>
        <begin position="1"/>
        <end position="353"/>
    </location>
</feature>
<feature type="topological domain" description="Cytoplasmic" evidence="1">
    <location>
        <begin position="1"/>
        <end position="31"/>
    </location>
</feature>
<feature type="transmembrane region" description="Helical" evidence="2">
    <location>
        <begin position="32"/>
        <end position="52"/>
    </location>
</feature>
<feature type="topological domain" description="Lumenal" evidence="1">
    <location>
        <begin position="53"/>
        <end position="66"/>
    </location>
</feature>
<feature type="transmembrane region" description="Helical" evidence="2">
    <location>
        <begin position="67"/>
        <end position="87"/>
    </location>
</feature>
<feature type="topological domain" description="Cytoplasmic" evidence="1">
    <location>
        <begin position="88"/>
        <end position="102"/>
    </location>
</feature>
<feature type="transmembrane region" description="Helical" evidence="2">
    <location>
        <begin position="103"/>
        <end position="122"/>
    </location>
</feature>
<feature type="topological domain" description="Lumenal" evidence="1">
    <location>
        <begin position="123"/>
        <end position="125"/>
    </location>
</feature>
<feature type="transmembrane region" description="Helical" evidence="2">
    <location>
        <begin position="126"/>
        <end position="148"/>
    </location>
</feature>
<feature type="topological domain" description="Cytoplasmic" evidence="1">
    <location>
        <begin position="149"/>
        <end position="154"/>
    </location>
</feature>
<feature type="transmembrane region" description="Helical" evidence="2">
    <location>
        <begin position="155"/>
        <end position="172"/>
    </location>
</feature>
<feature type="topological domain" description="Lumenal" evidence="1">
    <location>
        <begin position="173"/>
        <end position="187"/>
    </location>
</feature>
<feature type="transmembrane region" description="Helical" evidence="2">
    <location>
        <begin position="188"/>
        <end position="208"/>
    </location>
</feature>
<feature type="topological domain" description="Cytoplasmic" evidence="1">
    <location>
        <begin position="209"/>
        <end position="227"/>
    </location>
</feature>
<feature type="transmembrane region" description="Helical" evidence="2">
    <location>
        <begin position="228"/>
        <end position="248"/>
    </location>
</feature>
<feature type="topological domain" description="Lumenal" evidence="1">
    <location>
        <begin position="249"/>
        <end position="262"/>
    </location>
</feature>
<feature type="transmembrane region" description="Helical" evidence="2">
    <location>
        <begin position="263"/>
        <end position="283"/>
    </location>
</feature>
<feature type="topological domain" description="Cytoplasmic" evidence="1">
    <location>
        <begin position="284"/>
        <end position="290"/>
    </location>
</feature>
<feature type="transmembrane region" description="Helical" evidence="2">
    <location>
        <begin position="291"/>
        <end position="313"/>
    </location>
</feature>
<feature type="topological domain" description="Lumenal" evidence="1">
    <location>
        <begin position="314"/>
        <end position="316"/>
    </location>
</feature>
<feature type="transmembrane region" description="Helical" evidence="2">
    <location>
        <begin position="317"/>
        <end position="336"/>
    </location>
</feature>
<feature type="topological domain" description="Cytoplasmic" evidence="1">
    <location>
        <begin position="337"/>
        <end position="353"/>
    </location>
</feature>
<feature type="glycosylation site" description="N-linked (GlcNAc...) asparagine" evidence="2">
    <location>
        <position position="260"/>
    </location>
</feature>
<name>GMT_PICGU</name>
<dbReference type="EMBL" id="CH408157">
    <property type="protein sequence ID" value="EDK39041.1"/>
    <property type="molecule type" value="Genomic_DNA"/>
</dbReference>
<dbReference type="RefSeq" id="XP_001485410.1">
    <property type="nucleotide sequence ID" value="XM_001485360.1"/>
</dbReference>
<dbReference type="SMR" id="A5DIN8"/>
<dbReference type="FunCoup" id="A5DIN8">
    <property type="interactions" value="533"/>
</dbReference>
<dbReference type="STRING" id="294746.A5DIN8"/>
<dbReference type="GlyCosmos" id="A5DIN8">
    <property type="glycosylation" value="1 site, No reported glycans"/>
</dbReference>
<dbReference type="GeneID" id="5126921"/>
<dbReference type="KEGG" id="pgu:PGUG_03139"/>
<dbReference type="eggNOG" id="KOG1444">
    <property type="taxonomic scope" value="Eukaryota"/>
</dbReference>
<dbReference type="HOGENOM" id="CLU_025360_1_2_1"/>
<dbReference type="InParanoid" id="A5DIN8"/>
<dbReference type="OMA" id="VWMLINC"/>
<dbReference type="OrthoDB" id="417037at2759"/>
<dbReference type="Proteomes" id="UP000001997">
    <property type="component" value="Unassembled WGS sequence"/>
</dbReference>
<dbReference type="GO" id="GO:0030659">
    <property type="term" value="C:cytoplasmic vesicle membrane"/>
    <property type="evidence" value="ECO:0007669"/>
    <property type="project" value="UniProtKB-SubCell"/>
</dbReference>
<dbReference type="GO" id="GO:0005789">
    <property type="term" value="C:endoplasmic reticulum membrane"/>
    <property type="evidence" value="ECO:0007669"/>
    <property type="project" value="UniProtKB-SubCell"/>
</dbReference>
<dbReference type="GO" id="GO:0000139">
    <property type="term" value="C:Golgi membrane"/>
    <property type="evidence" value="ECO:0007669"/>
    <property type="project" value="UniProtKB-SubCell"/>
</dbReference>
<dbReference type="InterPro" id="IPR050186">
    <property type="entry name" value="TPT_transporter"/>
</dbReference>
<dbReference type="NCBIfam" id="TIGR00803">
    <property type="entry name" value="nst"/>
    <property type="match status" value="1"/>
</dbReference>
<dbReference type="PANTHER" id="PTHR11132">
    <property type="entry name" value="SOLUTE CARRIER FAMILY 35"/>
    <property type="match status" value="1"/>
</dbReference>
<dbReference type="SUPFAM" id="SSF103481">
    <property type="entry name" value="Multidrug resistance efflux transporter EmrE"/>
    <property type="match status" value="1"/>
</dbReference>
<comment type="function">
    <text evidence="1">Involved in the import of GDP-mannose from the cytoplasm into the Golgi lumen.</text>
</comment>
<comment type="subunit">
    <text evidence="1">Homooligomer.</text>
</comment>
<comment type="subcellular location">
    <subcellularLocation>
        <location evidence="1">Golgi apparatus membrane</location>
        <topology evidence="1">Multi-pass membrane protein</topology>
    </subcellularLocation>
    <subcellularLocation>
        <location evidence="1">Cytoplasmic vesicle membrane</location>
        <topology evidence="1">Multi-pass membrane protein</topology>
    </subcellularLocation>
    <subcellularLocation>
        <location evidence="1">Endoplasmic reticulum membrane</location>
        <topology evidence="1">Multi-pass membrane protein</topology>
    </subcellularLocation>
</comment>
<comment type="similarity">
    <text evidence="3">Belongs to the TPT transporter family. SLC35D subfamily.</text>
</comment>
<protein>
    <recommendedName>
        <fullName>GDP-mannose transporter</fullName>
        <shortName>GMT</shortName>
    </recommendedName>
</protein>
<proteinExistence type="inferred from homology"/>
<sequence>MGLLLSYLFGYIFYSVNKKFHIMEKFGASNSIVNNGPVSIFAYCASSILMTVTNKFVVGAYEFNLNFFLLAVQAAVCLVTIATLKGLGIITYRQFNKDEAKKWFPIAFLLVLMIYTSSKALQYLSIPVYTIFKNLTIILIAYGEVIWFGGKVTTMALGSFILMVLSSVIAYYGDTAETGEKTAEMHLLYLGYAWMFTNCFSSAAFVLIMRKRIKLTNFKDFDTMYYNNLLSLPLLLVFSFLFEDWSSVNLNKNFPPDNRNTTIFVMILSGASSVGISYCSAWCVRVTSSTTYSMVGALNKLPIALSGLVFFNAAVNFWSVSSIFVGFLAGVFYAVAKQKQQKENAQQLPVANK</sequence>
<keyword id="KW-0968">Cytoplasmic vesicle</keyword>
<keyword id="KW-0256">Endoplasmic reticulum</keyword>
<keyword id="KW-0325">Glycoprotein</keyword>
<keyword id="KW-0333">Golgi apparatus</keyword>
<keyword id="KW-0472">Membrane</keyword>
<keyword id="KW-1185">Reference proteome</keyword>
<keyword id="KW-0762">Sugar transport</keyword>
<keyword id="KW-0812">Transmembrane</keyword>
<keyword id="KW-1133">Transmembrane helix</keyword>
<keyword id="KW-0813">Transport</keyword>
<organism>
    <name type="scientific">Meyerozyma guilliermondii (strain ATCC 6260 / CBS 566 / DSM 6381 / JCM 1539 / NBRC 10279 / NRRL Y-324)</name>
    <name type="common">Yeast</name>
    <name type="synonym">Candida guilliermondii</name>
    <dbReference type="NCBI Taxonomy" id="294746"/>
    <lineage>
        <taxon>Eukaryota</taxon>
        <taxon>Fungi</taxon>
        <taxon>Dikarya</taxon>
        <taxon>Ascomycota</taxon>
        <taxon>Saccharomycotina</taxon>
        <taxon>Pichiomycetes</taxon>
        <taxon>Debaryomycetaceae</taxon>
        <taxon>Meyerozyma</taxon>
    </lineage>
</organism>
<evidence type="ECO:0000250" key="1"/>
<evidence type="ECO:0000255" key="2"/>
<evidence type="ECO:0000305" key="3"/>